<feature type="chain" id="PRO_0000117078" description="tRNA uridine 5-carboxymethylaminomethyl modification enzyme MnmG">
    <location>
        <begin position="1"/>
        <end position="619"/>
    </location>
</feature>
<feature type="binding site" evidence="1">
    <location>
        <begin position="8"/>
        <end position="13"/>
    </location>
    <ligand>
        <name>FAD</name>
        <dbReference type="ChEBI" id="CHEBI:57692"/>
    </ligand>
</feature>
<feature type="binding site" evidence="1">
    <location>
        <begin position="267"/>
        <end position="281"/>
    </location>
    <ligand>
        <name>NAD(+)</name>
        <dbReference type="ChEBI" id="CHEBI:57540"/>
    </ligand>
</feature>
<accession>Q5HTS6</accession>
<comment type="function">
    <text evidence="1">NAD-binding protein involved in the addition of a carboxymethylaminomethyl (cmnm) group at the wobble position (U34) of certain tRNAs, forming tRNA-cmnm(5)s(2)U34.</text>
</comment>
<comment type="cofactor">
    <cofactor evidence="1">
        <name>FAD</name>
        <dbReference type="ChEBI" id="CHEBI:57692"/>
    </cofactor>
</comment>
<comment type="subunit">
    <text evidence="1">Homodimer. Heterotetramer of two MnmE and two MnmG subunits.</text>
</comment>
<comment type="subcellular location">
    <subcellularLocation>
        <location evidence="1">Cytoplasm</location>
    </subcellularLocation>
</comment>
<comment type="similarity">
    <text evidence="1">Belongs to the MnmG family.</text>
</comment>
<evidence type="ECO:0000255" key="1">
    <source>
        <dbReference type="HAMAP-Rule" id="MF_00129"/>
    </source>
</evidence>
<keyword id="KW-0963">Cytoplasm</keyword>
<keyword id="KW-0274">FAD</keyword>
<keyword id="KW-0285">Flavoprotein</keyword>
<keyword id="KW-0520">NAD</keyword>
<keyword id="KW-0819">tRNA processing</keyword>
<dbReference type="EMBL" id="CP000025">
    <property type="protein sequence ID" value="AAW35643.1"/>
    <property type="molecule type" value="Genomic_DNA"/>
</dbReference>
<dbReference type="RefSeq" id="WP_011049896.1">
    <property type="nucleotide sequence ID" value="NC_003912.7"/>
</dbReference>
<dbReference type="SMR" id="Q5HTS6"/>
<dbReference type="KEGG" id="cjr:CJE1322"/>
<dbReference type="HOGENOM" id="CLU_007831_2_2_7"/>
<dbReference type="GO" id="GO:0005829">
    <property type="term" value="C:cytosol"/>
    <property type="evidence" value="ECO:0007669"/>
    <property type="project" value="TreeGrafter"/>
</dbReference>
<dbReference type="GO" id="GO:0050660">
    <property type="term" value="F:flavin adenine dinucleotide binding"/>
    <property type="evidence" value="ECO:0007669"/>
    <property type="project" value="UniProtKB-UniRule"/>
</dbReference>
<dbReference type="GO" id="GO:0030488">
    <property type="term" value="P:tRNA methylation"/>
    <property type="evidence" value="ECO:0007669"/>
    <property type="project" value="TreeGrafter"/>
</dbReference>
<dbReference type="GO" id="GO:0002098">
    <property type="term" value="P:tRNA wobble uridine modification"/>
    <property type="evidence" value="ECO:0007669"/>
    <property type="project" value="InterPro"/>
</dbReference>
<dbReference type="FunFam" id="1.10.150.570:FF:000001">
    <property type="entry name" value="tRNA uridine 5-carboxymethylaminomethyl modification enzyme MnmG"/>
    <property type="match status" value="1"/>
</dbReference>
<dbReference type="FunFam" id="3.50.50.60:FF:000002">
    <property type="entry name" value="tRNA uridine 5-carboxymethylaminomethyl modification enzyme MnmG"/>
    <property type="match status" value="1"/>
</dbReference>
<dbReference type="Gene3D" id="3.50.50.60">
    <property type="entry name" value="FAD/NAD(P)-binding domain"/>
    <property type="match status" value="2"/>
</dbReference>
<dbReference type="Gene3D" id="1.10.150.570">
    <property type="entry name" value="GidA associated domain, C-terminal subdomain"/>
    <property type="match status" value="1"/>
</dbReference>
<dbReference type="Gene3D" id="1.10.10.1800">
    <property type="entry name" value="tRNA uridine 5-carboxymethylaminomethyl modification enzyme MnmG/GidA"/>
    <property type="match status" value="1"/>
</dbReference>
<dbReference type="HAMAP" id="MF_00129">
    <property type="entry name" value="MnmG_GidA"/>
    <property type="match status" value="1"/>
</dbReference>
<dbReference type="InterPro" id="IPR036188">
    <property type="entry name" value="FAD/NAD-bd_sf"/>
</dbReference>
<dbReference type="InterPro" id="IPR049312">
    <property type="entry name" value="GIDA_C_N"/>
</dbReference>
<dbReference type="InterPro" id="IPR004416">
    <property type="entry name" value="MnmG"/>
</dbReference>
<dbReference type="InterPro" id="IPR002218">
    <property type="entry name" value="MnmG-rel"/>
</dbReference>
<dbReference type="InterPro" id="IPR020595">
    <property type="entry name" value="MnmG-rel_CS"/>
</dbReference>
<dbReference type="InterPro" id="IPR026904">
    <property type="entry name" value="MnmG_C"/>
</dbReference>
<dbReference type="InterPro" id="IPR047001">
    <property type="entry name" value="MnmG_C_subdom"/>
</dbReference>
<dbReference type="InterPro" id="IPR044920">
    <property type="entry name" value="MnmG_C_subdom_sf"/>
</dbReference>
<dbReference type="InterPro" id="IPR040131">
    <property type="entry name" value="MnmG_N"/>
</dbReference>
<dbReference type="NCBIfam" id="TIGR00136">
    <property type="entry name" value="mnmG_gidA"/>
    <property type="match status" value="1"/>
</dbReference>
<dbReference type="PANTHER" id="PTHR11806">
    <property type="entry name" value="GLUCOSE INHIBITED DIVISION PROTEIN A"/>
    <property type="match status" value="1"/>
</dbReference>
<dbReference type="PANTHER" id="PTHR11806:SF0">
    <property type="entry name" value="PROTEIN MTO1 HOMOLOG, MITOCHONDRIAL"/>
    <property type="match status" value="1"/>
</dbReference>
<dbReference type="Pfam" id="PF01134">
    <property type="entry name" value="GIDA"/>
    <property type="match status" value="1"/>
</dbReference>
<dbReference type="Pfam" id="PF21680">
    <property type="entry name" value="GIDA_C_1st"/>
    <property type="match status" value="1"/>
</dbReference>
<dbReference type="Pfam" id="PF13932">
    <property type="entry name" value="SAM_GIDA_C"/>
    <property type="match status" value="1"/>
</dbReference>
<dbReference type="SMART" id="SM01228">
    <property type="entry name" value="GIDA_assoc_3"/>
    <property type="match status" value="1"/>
</dbReference>
<dbReference type="SUPFAM" id="SSF51905">
    <property type="entry name" value="FAD/NAD(P)-binding domain"/>
    <property type="match status" value="1"/>
</dbReference>
<dbReference type="PROSITE" id="PS01280">
    <property type="entry name" value="GIDA_1"/>
    <property type="match status" value="1"/>
</dbReference>
<dbReference type="PROSITE" id="PS01281">
    <property type="entry name" value="GIDA_2"/>
    <property type="match status" value="1"/>
</dbReference>
<protein>
    <recommendedName>
        <fullName evidence="1">tRNA uridine 5-carboxymethylaminomethyl modification enzyme MnmG</fullName>
    </recommendedName>
    <alternativeName>
        <fullName evidence="1">Glucose-inhibited division protein A</fullName>
    </alternativeName>
</protein>
<proteinExistence type="inferred from homology"/>
<gene>
    <name evidence="1" type="primary">mnmG</name>
    <name evidence="1" type="synonym">gidA</name>
    <name type="ordered locus">CJE1322</name>
</gene>
<organism>
    <name type="scientific">Campylobacter jejuni (strain RM1221)</name>
    <dbReference type="NCBI Taxonomy" id="195099"/>
    <lineage>
        <taxon>Bacteria</taxon>
        <taxon>Pseudomonadati</taxon>
        <taxon>Campylobacterota</taxon>
        <taxon>Epsilonproteobacteria</taxon>
        <taxon>Campylobacterales</taxon>
        <taxon>Campylobacteraceae</taxon>
        <taxon>Campylobacter</taxon>
    </lineage>
</organism>
<reference key="1">
    <citation type="journal article" date="2005" name="PLoS Biol.">
        <title>Major structural differences and novel potential virulence mechanisms from the genomes of multiple Campylobacter species.</title>
        <authorList>
            <person name="Fouts D.E."/>
            <person name="Mongodin E.F."/>
            <person name="Mandrell R.E."/>
            <person name="Miller W.G."/>
            <person name="Rasko D.A."/>
            <person name="Ravel J."/>
            <person name="Brinkac L.M."/>
            <person name="DeBoy R.T."/>
            <person name="Parker C.T."/>
            <person name="Daugherty S.C."/>
            <person name="Dodson R.J."/>
            <person name="Durkin A.S."/>
            <person name="Madupu R."/>
            <person name="Sullivan S.A."/>
            <person name="Shetty J.U."/>
            <person name="Ayodeji M.A."/>
            <person name="Shvartsbeyn A."/>
            <person name="Schatz M.C."/>
            <person name="Badger J.H."/>
            <person name="Fraser C.M."/>
            <person name="Nelson K.E."/>
        </authorList>
    </citation>
    <scope>NUCLEOTIDE SEQUENCE [LARGE SCALE GENOMIC DNA]</scope>
    <source>
        <strain>RM1221</strain>
    </source>
</reference>
<sequence length="619" mass="69200">MFDVIVIGGGHAGVEASAAAARMGKKTLLLTTLIEQIGAASCNPAIGGLAKGHLVKELDAMGGLMGEITDEAGIQFRILNESKGVAVQGSRAQIDMDKYRIIARNKLLKLPNLEISQEQASVLIVENDEVKGVKTNLENIYFAKKVILTTGTFLNGLIHVGENKLQAGRVGELASVNLGNYLQTLGLKMGRLKTGTCPRVDAKSIDFSVLEIQDGDVNPKAFSFRSRNFNPTQLPCYIARTNTTTHEIIKNNFYRAPLFTGQIEGVGPRYCPSIEDKINRFSDKESHHLFIEPQTIDATEYYINGFSTSLPYEVQTQMLRSVKGFENAKITRFGYAIEYDYIEPTELKHTLELKKIKNLYCAGQINGTTGYEEAAAQGFMAGINASLSIDMKEPLILRRDEAYIGVLIDDLVVKGTKEPYRMFTSRAEFRLLLREENAILRLGKYGYDLGLLSEQDFTYIQNIANNLQKGLEFLLSKEFTPNNQNNAFLESLGEDKISSIVNLQKIVARASFDIEKLKKLDPIFETMDHYSLREILNEAKYYHYISMQKAQVEKMKNLSELKIPENFDFKSVSGLSNEVVEKLNHHKPPTIFAASQISGITPAALDILQIYIKMQKKKV</sequence>
<name>MNMG_CAMJR</name>